<feature type="chain" id="PRO_0000187663" description="Uroporphyrinogen decarboxylase">
    <location>
        <begin position="1"/>
        <end position="354"/>
    </location>
</feature>
<feature type="binding site" evidence="1">
    <location>
        <begin position="25"/>
        <end position="29"/>
    </location>
    <ligand>
        <name>substrate</name>
    </ligand>
</feature>
<feature type="binding site" evidence="1">
    <location>
        <position position="44"/>
    </location>
    <ligand>
        <name>substrate</name>
    </ligand>
</feature>
<feature type="binding site" evidence="1">
    <location>
        <position position="75"/>
    </location>
    <ligand>
        <name>substrate</name>
    </ligand>
</feature>
<feature type="binding site" evidence="1">
    <location>
        <position position="152"/>
    </location>
    <ligand>
        <name>substrate</name>
    </ligand>
</feature>
<feature type="binding site" evidence="1">
    <location>
        <position position="207"/>
    </location>
    <ligand>
        <name>substrate</name>
    </ligand>
</feature>
<feature type="binding site" evidence="1">
    <location>
        <position position="330"/>
    </location>
    <ligand>
        <name>substrate</name>
    </ligand>
</feature>
<feature type="site" description="Transition state stabilizer" evidence="1">
    <location>
        <position position="75"/>
    </location>
</feature>
<proteinExistence type="inferred from homology"/>
<evidence type="ECO:0000255" key="1">
    <source>
        <dbReference type="HAMAP-Rule" id="MF_00218"/>
    </source>
</evidence>
<protein>
    <recommendedName>
        <fullName evidence="1">Uroporphyrinogen decarboxylase</fullName>
        <shortName evidence="1">UPD</shortName>
        <shortName evidence="1">URO-D</shortName>
        <ecNumber evidence="1">4.1.1.37</ecNumber>
    </recommendedName>
</protein>
<sequence>MLKNDRLLRALRRQPVDRTPVWLMRQAGRYLPEYRATRARAGSFLGMAKNPDIACEVTLQPLERFPLDAAILFSDILTIPDAMGLELYFVEGEGPKFRHPVRDADAIHRLGVPDMETELRYVMDAVRLIRRELDGAVPLIGFSGSPWTLACYMIEGGGSKEYARIKAMAFNAPQLLHHLLSTVTDAVIAYLSAQRAAGAQALQVFDTWGGVLSPAMYREFSLPYLTRIAQELERGSGEERTPLVLFGKGNGAYVSELAASGAEAVGVDWTISLADAAERAGGRVALQGNLDPATLYGSPDAIRSEVGKTLDSYAYGNGGSREGHVFNLGHGMSPDMNPDHVGVLVEAVQTLSKR</sequence>
<organism>
    <name type="scientific">Xanthomonas campestris pv. campestris (strain ATCC 33913 / DSM 3586 / NCPPB 528 / LMG 568 / P 25)</name>
    <dbReference type="NCBI Taxonomy" id="190485"/>
    <lineage>
        <taxon>Bacteria</taxon>
        <taxon>Pseudomonadati</taxon>
        <taxon>Pseudomonadota</taxon>
        <taxon>Gammaproteobacteria</taxon>
        <taxon>Lysobacterales</taxon>
        <taxon>Lysobacteraceae</taxon>
        <taxon>Xanthomonas</taxon>
    </lineage>
</organism>
<reference key="1">
    <citation type="journal article" date="2002" name="Nature">
        <title>Comparison of the genomes of two Xanthomonas pathogens with differing host specificities.</title>
        <authorList>
            <person name="da Silva A.C.R."/>
            <person name="Ferro J.A."/>
            <person name="Reinach F.C."/>
            <person name="Farah C.S."/>
            <person name="Furlan L.R."/>
            <person name="Quaggio R.B."/>
            <person name="Monteiro-Vitorello C.B."/>
            <person name="Van Sluys M.A."/>
            <person name="Almeida N.F. Jr."/>
            <person name="Alves L.M.C."/>
            <person name="do Amaral A.M."/>
            <person name="Bertolini M.C."/>
            <person name="Camargo L.E.A."/>
            <person name="Camarotte G."/>
            <person name="Cannavan F."/>
            <person name="Cardozo J."/>
            <person name="Chambergo F."/>
            <person name="Ciapina L.P."/>
            <person name="Cicarelli R.M.B."/>
            <person name="Coutinho L.L."/>
            <person name="Cursino-Santos J.R."/>
            <person name="El-Dorry H."/>
            <person name="Faria J.B."/>
            <person name="Ferreira A.J.S."/>
            <person name="Ferreira R.C.C."/>
            <person name="Ferro M.I.T."/>
            <person name="Formighieri E.F."/>
            <person name="Franco M.C."/>
            <person name="Greggio C.C."/>
            <person name="Gruber A."/>
            <person name="Katsuyama A.M."/>
            <person name="Kishi L.T."/>
            <person name="Leite R.P."/>
            <person name="Lemos E.G.M."/>
            <person name="Lemos M.V.F."/>
            <person name="Locali E.C."/>
            <person name="Machado M.A."/>
            <person name="Madeira A.M.B.N."/>
            <person name="Martinez-Rossi N.M."/>
            <person name="Martins E.C."/>
            <person name="Meidanis J."/>
            <person name="Menck C.F.M."/>
            <person name="Miyaki C.Y."/>
            <person name="Moon D.H."/>
            <person name="Moreira L.M."/>
            <person name="Novo M.T.M."/>
            <person name="Okura V.K."/>
            <person name="Oliveira M.C."/>
            <person name="Oliveira V.R."/>
            <person name="Pereira H.A."/>
            <person name="Rossi A."/>
            <person name="Sena J.A.D."/>
            <person name="Silva C."/>
            <person name="de Souza R.F."/>
            <person name="Spinola L.A.F."/>
            <person name="Takita M.A."/>
            <person name="Tamura R.E."/>
            <person name="Teixeira E.C."/>
            <person name="Tezza R.I.D."/>
            <person name="Trindade dos Santos M."/>
            <person name="Truffi D."/>
            <person name="Tsai S.M."/>
            <person name="White F.F."/>
            <person name="Setubal J.C."/>
            <person name="Kitajima J.P."/>
        </authorList>
    </citation>
    <scope>NUCLEOTIDE SEQUENCE [LARGE SCALE GENOMIC DNA]</scope>
    <source>
        <strain>ATCC 33913 / DSM 3586 / NCPPB 528 / LMG 568 / P 25</strain>
    </source>
</reference>
<gene>
    <name evidence="1" type="primary">hemE</name>
    <name type="ordered locus">XCC2844</name>
</gene>
<accession>Q8P6X1</accession>
<comment type="function">
    <text evidence="1">Catalyzes the decarboxylation of four acetate groups of uroporphyrinogen-III to yield coproporphyrinogen-III.</text>
</comment>
<comment type="catalytic activity">
    <reaction evidence="1">
        <text>uroporphyrinogen III + 4 H(+) = coproporphyrinogen III + 4 CO2</text>
        <dbReference type="Rhea" id="RHEA:19865"/>
        <dbReference type="ChEBI" id="CHEBI:15378"/>
        <dbReference type="ChEBI" id="CHEBI:16526"/>
        <dbReference type="ChEBI" id="CHEBI:57308"/>
        <dbReference type="ChEBI" id="CHEBI:57309"/>
        <dbReference type="EC" id="4.1.1.37"/>
    </reaction>
</comment>
<comment type="pathway">
    <text evidence="1">Porphyrin-containing compound metabolism; protoporphyrin-IX biosynthesis; coproporphyrinogen-III from 5-aminolevulinate: step 4/4.</text>
</comment>
<comment type="subunit">
    <text evidence="1">Homodimer.</text>
</comment>
<comment type="subcellular location">
    <subcellularLocation>
        <location evidence="1">Cytoplasm</location>
    </subcellularLocation>
</comment>
<comment type="similarity">
    <text evidence="1">Belongs to the uroporphyrinogen decarboxylase family.</text>
</comment>
<keyword id="KW-0963">Cytoplasm</keyword>
<keyword id="KW-0210">Decarboxylase</keyword>
<keyword id="KW-0456">Lyase</keyword>
<keyword id="KW-0627">Porphyrin biosynthesis</keyword>
<keyword id="KW-1185">Reference proteome</keyword>
<name>DCUP_XANCP</name>
<dbReference type="EC" id="4.1.1.37" evidence="1"/>
<dbReference type="EMBL" id="AE008922">
    <property type="protein sequence ID" value="AAM42116.1"/>
    <property type="molecule type" value="Genomic_DNA"/>
</dbReference>
<dbReference type="RefSeq" id="NP_638192.1">
    <property type="nucleotide sequence ID" value="NC_003902.1"/>
</dbReference>
<dbReference type="RefSeq" id="WP_011037969.1">
    <property type="nucleotide sequence ID" value="NC_003902.1"/>
</dbReference>
<dbReference type="SMR" id="Q8P6X1"/>
<dbReference type="STRING" id="190485.XCC2844"/>
<dbReference type="EnsemblBacteria" id="AAM42116">
    <property type="protein sequence ID" value="AAM42116"/>
    <property type="gene ID" value="XCC2844"/>
</dbReference>
<dbReference type="KEGG" id="xcc:XCC2844"/>
<dbReference type="PATRIC" id="fig|190485.4.peg.3043"/>
<dbReference type="eggNOG" id="COG0407">
    <property type="taxonomic scope" value="Bacteria"/>
</dbReference>
<dbReference type="HOGENOM" id="CLU_040933_0_0_6"/>
<dbReference type="OrthoDB" id="9806656at2"/>
<dbReference type="UniPathway" id="UPA00251">
    <property type="reaction ID" value="UER00321"/>
</dbReference>
<dbReference type="Proteomes" id="UP000001010">
    <property type="component" value="Chromosome"/>
</dbReference>
<dbReference type="GO" id="GO:0005829">
    <property type="term" value="C:cytosol"/>
    <property type="evidence" value="ECO:0000318"/>
    <property type="project" value="GO_Central"/>
</dbReference>
<dbReference type="GO" id="GO:0004853">
    <property type="term" value="F:uroporphyrinogen decarboxylase activity"/>
    <property type="evidence" value="ECO:0000318"/>
    <property type="project" value="GO_Central"/>
</dbReference>
<dbReference type="GO" id="GO:0006783">
    <property type="term" value="P:heme biosynthetic process"/>
    <property type="evidence" value="ECO:0000318"/>
    <property type="project" value="GO_Central"/>
</dbReference>
<dbReference type="GO" id="GO:0019353">
    <property type="term" value="P:protoporphyrinogen IX biosynthetic process from glutamate"/>
    <property type="evidence" value="ECO:0000318"/>
    <property type="project" value="GO_Central"/>
</dbReference>
<dbReference type="CDD" id="cd00717">
    <property type="entry name" value="URO-D"/>
    <property type="match status" value="1"/>
</dbReference>
<dbReference type="FunFam" id="3.20.20.210:FF:000001">
    <property type="entry name" value="Uroporphyrinogen decarboxylase"/>
    <property type="match status" value="1"/>
</dbReference>
<dbReference type="Gene3D" id="3.20.20.210">
    <property type="match status" value="1"/>
</dbReference>
<dbReference type="HAMAP" id="MF_00218">
    <property type="entry name" value="URO_D"/>
    <property type="match status" value="1"/>
</dbReference>
<dbReference type="InterPro" id="IPR038071">
    <property type="entry name" value="UROD/MetE-like_sf"/>
</dbReference>
<dbReference type="InterPro" id="IPR006361">
    <property type="entry name" value="Uroporphyrinogen_deCO2ase_HemE"/>
</dbReference>
<dbReference type="InterPro" id="IPR000257">
    <property type="entry name" value="Uroporphyrinogen_deCOase"/>
</dbReference>
<dbReference type="NCBIfam" id="TIGR01464">
    <property type="entry name" value="hemE"/>
    <property type="match status" value="1"/>
</dbReference>
<dbReference type="PANTHER" id="PTHR21091">
    <property type="entry name" value="METHYLTETRAHYDROFOLATE:HOMOCYSTEINE METHYLTRANSFERASE RELATED"/>
    <property type="match status" value="1"/>
</dbReference>
<dbReference type="PANTHER" id="PTHR21091:SF169">
    <property type="entry name" value="UROPORPHYRINOGEN DECARBOXYLASE"/>
    <property type="match status" value="1"/>
</dbReference>
<dbReference type="Pfam" id="PF01208">
    <property type="entry name" value="URO-D"/>
    <property type="match status" value="1"/>
</dbReference>
<dbReference type="SUPFAM" id="SSF51726">
    <property type="entry name" value="UROD/MetE-like"/>
    <property type="match status" value="1"/>
</dbReference>
<dbReference type="PROSITE" id="PS00906">
    <property type="entry name" value="UROD_1"/>
    <property type="match status" value="1"/>
</dbReference>
<dbReference type="PROSITE" id="PS00907">
    <property type="entry name" value="UROD_2"/>
    <property type="match status" value="1"/>
</dbReference>